<reference key="1">
    <citation type="journal article" date="2004" name="Genome Res.">
        <title>The status, quality, and expansion of the NIH full-length cDNA project: the Mammalian Gene Collection (MGC).</title>
        <authorList>
            <consortium name="The MGC Project Team"/>
        </authorList>
    </citation>
    <scope>NUCLEOTIDE SEQUENCE [LARGE SCALE MRNA]</scope>
    <source>
        <tissue>Duodenum</tissue>
    </source>
</reference>
<reference key="2">
    <citation type="journal article" date="2004" name="BMC Genomics">
        <title>Identification of a novel gene family that includes the interferon-inducible human genes 6-16 and ISG12.</title>
        <authorList>
            <person name="Parker N."/>
            <person name="Porter A.C.G."/>
        </authorList>
    </citation>
    <scope>IDENTIFICATION</scope>
    <scope>INDUCTION BY INTERFERON</scope>
</reference>
<reference key="3">
    <citation type="journal article" date="2017" name="Biol. Cell">
        <title>Apoptotic properties of the type 1 interferon induced family of human mitochondrial membrane ISG12 proteins.</title>
        <authorList>
            <person name="Gytz H."/>
            <person name="Hansen M.F."/>
            <person name="Skovbjerg S."/>
            <person name="Kristensen A.C."/>
            <person name="Hoerlyck S."/>
            <person name="Jensen M.B."/>
            <person name="Fredborg M."/>
            <person name="Markert L.D."/>
            <person name="McMillan N.A."/>
            <person name="Christensen E.I."/>
            <person name="Martensen P.M."/>
        </authorList>
    </citation>
    <scope>FUNCTION</scope>
</reference>
<reference key="4">
    <citation type="journal article" date="2017" name="Virus Res.">
        <title>ISG12a inhibits HCV replication and potentiates the anti-HCV activity of IFN-alpha through activation of the Jak/STAT signaling pathway independent of autophagy and apoptosis.</title>
        <authorList>
            <person name="Chen Y."/>
            <person name="Jiao B."/>
            <person name="Yao M."/>
            <person name="Shi X."/>
            <person name="Zheng Z."/>
            <person name="Li S."/>
            <person name="Chen L."/>
        </authorList>
    </citation>
    <scope>INDUCTION BY INTERFERON</scope>
</reference>
<reference key="5">
    <citation type="journal article" date="2012" name="Nat. Methods">
        <title>Facile backbone structure determination of human membrane proteins by NMR spectroscopy.</title>
        <authorList>
            <person name="Klammt C."/>
            <person name="Maslennikov I."/>
            <person name="Bayrhuber M."/>
            <person name="Eichmann C."/>
            <person name="Vajpai N."/>
            <person name="Chiu E.J."/>
            <person name="Blain K.Y."/>
            <person name="Esquivies L."/>
            <person name="Kwon J.H."/>
            <person name="Balana B."/>
            <person name="Pieper U."/>
            <person name="Sali A."/>
            <person name="Slesinger P.A."/>
            <person name="Kwiatkowski W."/>
            <person name="Riek R."/>
            <person name="Choe S."/>
        </authorList>
    </citation>
    <scope>STRUCTURE BY NMR</scope>
</reference>
<comment type="function">
    <text evidence="3">Plays a role in the apoptotic process and has a pro-apoptotic activity.</text>
</comment>
<comment type="interaction">
    <interactant intactId="EBI-17589287">
        <id>Q96BM0</id>
    </interactant>
    <interactant intactId="EBI-17589229">
        <id>Q6NTF9-3</id>
        <label>RHBDD2</label>
    </interactant>
    <organismsDiffer>false</organismsDiffer>
    <experiments>3</experiments>
</comment>
<comment type="subcellular location">
    <subcellularLocation>
        <location evidence="1">Membrane</location>
        <topology evidence="1">Multi-pass membrane protein</topology>
    </subcellularLocation>
</comment>
<comment type="induction">
    <text evidence="2 4">Not up-regulated by type-I interferon.</text>
</comment>
<comment type="similarity">
    <text evidence="7">Belongs to the IFI6/IFI27 family.</text>
</comment>
<organism>
    <name type="scientific">Homo sapiens</name>
    <name type="common">Human</name>
    <dbReference type="NCBI Taxonomy" id="9606"/>
    <lineage>
        <taxon>Eukaryota</taxon>
        <taxon>Metazoa</taxon>
        <taxon>Chordata</taxon>
        <taxon>Craniata</taxon>
        <taxon>Vertebrata</taxon>
        <taxon>Euteleostomi</taxon>
        <taxon>Mammalia</taxon>
        <taxon>Eutheria</taxon>
        <taxon>Euarchontoglires</taxon>
        <taxon>Primates</taxon>
        <taxon>Haplorrhini</taxon>
        <taxon>Catarrhini</taxon>
        <taxon>Hominidae</taxon>
        <taxon>Homo</taxon>
    </lineage>
</organism>
<protein>
    <recommendedName>
        <fullName evidence="7">Interferon alpha-inducible protein 27-like protein 1</fullName>
    </recommendedName>
    <alternativeName>
        <fullName evidence="5">Interferon-stimulated gene 12c protein</fullName>
        <shortName evidence="5">ISG12(c)</shortName>
        <shortName evidence="6">ISG12C</shortName>
    </alternativeName>
</protein>
<sequence length="104" mass="9549">MGKESGWDSGRAAVAAVVGGVVAVGTVLVALSAMGFTSVGIAASSIAAKMMSTAAIANGGGVAAGSLVAILQSVGAAGLSVTSKVIGGFAGTALGAWLGSPPSS</sequence>
<accession>Q96BM0</accession>
<feature type="chain" id="PRO_0000147371" description="Interferon alpha-inducible protein 27-like protein 1">
    <location>
        <begin position="1"/>
        <end position="104"/>
    </location>
</feature>
<feature type="transmembrane region" description="Helical" evidence="1">
    <location>
        <begin position="14"/>
        <end position="34"/>
    </location>
</feature>
<feature type="transmembrane region" description="Helical" evidence="1">
    <location>
        <begin position="59"/>
        <end position="79"/>
    </location>
</feature>
<feature type="transmembrane region" description="Helical" evidence="1">
    <location>
        <begin position="81"/>
        <end position="101"/>
    </location>
</feature>
<feature type="sequence variant" id="VAR_062245" description="In dbSNP:rs57677258.">
    <original>G</original>
    <variation>S</variation>
    <location>
        <position position="35"/>
    </location>
</feature>
<feature type="helix" evidence="9">
    <location>
        <begin position="11"/>
        <end position="18"/>
    </location>
</feature>
<feature type="helix" evidence="9">
    <location>
        <begin position="21"/>
        <end position="32"/>
    </location>
</feature>
<feature type="strand" evidence="9">
    <location>
        <begin position="34"/>
        <end position="36"/>
    </location>
</feature>
<feature type="helix" evidence="9">
    <location>
        <begin position="39"/>
        <end position="48"/>
    </location>
</feature>
<feature type="turn" evidence="9">
    <location>
        <begin position="56"/>
        <end position="58"/>
    </location>
</feature>
<feature type="strand" evidence="9">
    <location>
        <begin position="60"/>
        <end position="63"/>
    </location>
</feature>
<feature type="helix" evidence="9">
    <location>
        <begin position="67"/>
        <end position="86"/>
    </location>
</feature>
<feature type="strand" evidence="9">
    <location>
        <begin position="88"/>
        <end position="92"/>
    </location>
</feature>
<feature type="strand" evidence="9">
    <location>
        <begin position="94"/>
        <end position="97"/>
    </location>
</feature>
<keyword id="KW-0002">3D-structure</keyword>
<keyword id="KW-0053">Apoptosis</keyword>
<keyword id="KW-0472">Membrane</keyword>
<keyword id="KW-1185">Reference proteome</keyword>
<keyword id="KW-0812">Transmembrane</keyword>
<keyword id="KW-1133">Transmembrane helix</keyword>
<gene>
    <name evidence="8" type="primary">IFI27L1</name>
    <name evidence="8" type="synonym">FAM14B</name>
</gene>
<evidence type="ECO:0000255" key="1"/>
<evidence type="ECO:0000269" key="2">
    <source>
    </source>
</evidence>
<evidence type="ECO:0000269" key="3">
    <source>
    </source>
</evidence>
<evidence type="ECO:0000269" key="4">
    <source>
    </source>
</evidence>
<evidence type="ECO:0000303" key="5">
    <source>
    </source>
</evidence>
<evidence type="ECO:0000303" key="6">
    <source>
    </source>
</evidence>
<evidence type="ECO:0000305" key="7"/>
<evidence type="ECO:0000312" key="8">
    <source>
        <dbReference type="HGNC" id="HGNC:19754"/>
    </source>
</evidence>
<evidence type="ECO:0007829" key="9">
    <source>
        <dbReference type="PDB" id="2LOQ"/>
    </source>
</evidence>
<proteinExistence type="evidence at protein level"/>
<name>I27L1_HUMAN</name>
<dbReference type="EMBL" id="BC015423">
    <property type="protein sequence ID" value="AAH15423.1"/>
    <property type="molecule type" value="mRNA"/>
</dbReference>
<dbReference type="EMBL" id="BN000225">
    <property type="protein sequence ID" value="CAE00392.1"/>
    <property type="molecule type" value="mRNA"/>
</dbReference>
<dbReference type="CCDS" id="CCDS9919.1"/>
<dbReference type="RefSeq" id="NP_660292.1">
    <property type="nucleotide sequence ID" value="NM_145249.3"/>
</dbReference>
<dbReference type="RefSeq" id="NP_996832.1">
    <property type="nucleotide sequence ID" value="NM_206949.3"/>
</dbReference>
<dbReference type="RefSeq" id="XP_011534707.1">
    <property type="nucleotide sequence ID" value="XM_011536405.2"/>
</dbReference>
<dbReference type="PDB" id="2LOQ">
    <property type="method" value="NMR"/>
    <property type="chains" value="A=1-104"/>
</dbReference>
<dbReference type="PDBsum" id="2LOQ"/>
<dbReference type="BMRB" id="Q96BM0"/>
<dbReference type="SMR" id="Q96BM0"/>
<dbReference type="BioGRID" id="125774">
    <property type="interactions" value="64"/>
</dbReference>
<dbReference type="FunCoup" id="Q96BM0">
    <property type="interactions" value="197"/>
</dbReference>
<dbReference type="IntAct" id="Q96BM0">
    <property type="interactions" value="64"/>
</dbReference>
<dbReference type="STRING" id="9606.ENSP00000376824"/>
<dbReference type="iPTMnet" id="Q96BM0"/>
<dbReference type="PhosphoSitePlus" id="Q96BM0"/>
<dbReference type="BioMuta" id="IFI27L1"/>
<dbReference type="DMDM" id="27805467"/>
<dbReference type="PaxDb" id="9606-ENSP00000451851"/>
<dbReference type="PeptideAtlas" id="Q96BM0"/>
<dbReference type="DNASU" id="122509"/>
<dbReference type="Ensembl" id="ENST00000393115.7">
    <property type="protein sequence ID" value="ENSP00000376824.3"/>
    <property type="gene ID" value="ENSG00000165948.11"/>
</dbReference>
<dbReference type="Ensembl" id="ENST00000555523.6">
    <property type="protein sequence ID" value="ENSP00000451851.1"/>
    <property type="gene ID" value="ENSG00000165948.11"/>
</dbReference>
<dbReference type="Ensembl" id="ENST00000611681.3">
    <property type="protein sequence ID" value="ENSP00000480235.1"/>
    <property type="gene ID" value="ENSG00000276880.3"/>
</dbReference>
<dbReference type="Ensembl" id="ENST00000629591.2">
    <property type="protein sequence ID" value="ENSP00000485930.1"/>
    <property type="gene ID" value="ENSG00000276880.3"/>
</dbReference>
<dbReference type="GeneID" id="122509"/>
<dbReference type="KEGG" id="hsa:122509"/>
<dbReference type="MANE-Select" id="ENST00000555523.6">
    <property type="protein sequence ID" value="ENSP00000451851.1"/>
    <property type="RefSeq nucleotide sequence ID" value="NM_206949.3"/>
    <property type="RefSeq protein sequence ID" value="NP_996832.1"/>
</dbReference>
<dbReference type="UCSC" id="uc001yck.4">
    <property type="organism name" value="human"/>
</dbReference>
<dbReference type="AGR" id="HGNC:19754"/>
<dbReference type="CTD" id="122509"/>
<dbReference type="DisGeNET" id="122509"/>
<dbReference type="GeneCards" id="IFI27L1"/>
<dbReference type="HGNC" id="HGNC:19754">
    <property type="gene designation" value="IFI27L1"/>
</dbReference>
<dbReference type="HPA" id="ENSG00000165948">
    <property type="expression patterns" value="Tissue enhanced (choroid plexus, testis)"/>
</dbReference>
<dbReference type="MIM" id="611320">
    <property type="type" value="gene"/>
</dbReference>
<dbReference type="neXtProt" id="NX_Q96BM0"/>
<dbReference type="OpenTargets" id="ENSG00000165948"/>
<dbReference type="PharmGKB" id="PA164720846"/>
<dbReference type="VEuPathDB" id="HostDB:ENSG00000165948"/>
<dbReference type="eggNOG" id="ENOG502S85T">
    <property type="taxonomic scope" value="Eukaryota"/>
</dbReference>
<dbReference type="GeneTree" id="ENSGT00940000165490"/>
<dbReference type="HOGENOM" id="CLU_142338_4_0_1"/>
<dbReference type="InParanoid" id="Q96BM0"/>
<dbReference type="OMA" id="YSASETC"/>
<dbReference type="PAN-GO" id="Q96BM0">
    <property type="GO annotations" value="2 GO annotations based on evolutionary models"/>
</dbReference>
<dbReference type="PhylomeDB" id="Q96BM0"/>
<dbReference type="TreeFam" id="TF340510"/>
<dbReference type="PathwayCommons" id="Q96BM0"/>
<dbReference type="SignaLink" id="Q96BM0"/>
<dbReference type="BioGRID-ORCS" id="122509">
    <property type="hits" value="14 hits in 1146 CRISPR screens"/>
</dbReference>
<dbReference type="ChiTaRS" id="IFI27L1">
    <property type="organism name" value="human"/>
</dbReference>
<dbReference type="EvolutionaryTrace" id="Q96BM0"/>
<dbReference type="GenomeRNAi" id="122509"/>
<dbReference type="Pharos" id="Q96BM0">
    <property type="development level" value="Tdark"/>
</dbReference>
<dbReference type="PRO" id="PR:Q96BM0"/>
<dbReference type="Proteomes" id="UP000005640">
    <property type="component" value="Chromosome 14"/>
</dbReference>
<dbReference type="RNAct" id="Q96BM0">
    <property type="molecule type" value="protein"/>
</dbReference>
<dbReference type="Bgee" id="ENSG00000165948">
    <property type="expression patterns" value="Expressed in right testis and 94 other cell types or tissues"/>
</dbReference>
<dbReference type="ExpressionAtlas" id="Q96BM0">
    <property type="expression patterns" value="baseline and differential"/>
</dbReference>
<dbReference type="GO" id="GO:0031966">
    <property type="term" value="C:mitochondrial membrane"/>
    <property type="evidence" value="ECO:0000318"/>
    <property type="project" value="GO_Central"/>
</dbReference>
<dbReference type="GO" id="GO:0060090">
    <property type="term" value="F:molecular adaptor activity"/>
    <property type="evidence" value="ECO:0000318"/>
    <property type="project" value="GO_Central"/>
</dbReference>
<dbReference type="GO" id="GO:0006915">
    <property type="term" value="P:apoptotic process"/>
    <property type="evidence" value="ECO:0000315"/>
    <property type="project" value="UniProtKB"/>
</dbReference>
<dbReference type="GO" id="GO:0097193">
    <property type="term" value="P:intrinsic apoptotic signaling pathway"/>
    <property type="evidence" value="ECO:0000318"/>
    <property type="project" value="GO_Central"/>
</dbReference>
<dbReference type="Gene3D" id="6.10.110.10">
    <property type="match status" value="1"/>
</dbReference>
<dbReference type="InterPro" id="IPR009311">
    <property type="entry name" value="IFI6/IFI27-like"/>
</dbReference>
<dbReference type="InterPro" id="IPR038213">
    <property type="entry name" value="IFI6/IFI27-like_sf"/>
</dbReference>
<dbReference type="PANTHER" id="PTHR16932">
    <property type="entry name" value="INTERFERON ALPHA-INDUCIBLE PROTEIN 27"/>
    <property type="match status" value="1"/>
</dbReference>
<dbReference type="PANTHER" id="PTHR16932:SF36">
    <property type="entry name" value="INTERFERON ALPHA-INDUCIBLE PROTEIN 27-LIKE PROTEIN 1"/>
    <property type="match status" value="1"/>
</dbReference>
<dbReference type="Pfam" id="PF06140">
    <property type="entry name" value="Ifi-6-16"/>
    <property type="match status" value="1"/>
</dbReference>